<comment type="function">
    <text evidence="1">May be involved in cell-adhesion. May function as a trans-neural growth-promoting factor in regenerative axon sprouting in the mammalian brain (By similarity).</text>
</comment>
<comment type="subcellular location">
    <subcellularLocation>
        <location evidence="1">Cell membrane</location>
        <topology evidence="1">Lipid-anchor</topology>
        <topology evidence="1">GPI-anchor</topology>
    </subcellularLocation>
</comment>
<comment type="similarity">
    <text evidence="6">Belongs to the immunoglobulin superfamily. IgLON family.</text>
</comment>
<reference key="1">
    <citation type="submission" date="2004-11" db="EMBL/GenBank/DDBJ databases">
        <authorList>
            <consortium name="The German cDNA consortium"/>
        </authorList>
    </citation>
    <scope>NUCLEOTIDE SEQUENCE [LARGE SCALE MRNA]</scope>
    <source>
        <tissue>Brain cortex</tissue>
    </source>
</reference>
<organism>
    <name type="scientific">Pongo abelii</name>
    <name type="common">Sumatran orangutan</name>
    <name type="synonym">Pongo pygmaeus abelii</name>
    <dbReference type="NCBI Taxonomy" id="9601"/>
    <lineage>
        <taxon>Eukaryota</taxon>
        <taxon>Metazoa</taxon>
        <taxon>Chordata</taxon>
        <taxon>Craniata</taxon>
        <taxon>Vertebrata</taxon>
        <taxon>Euteleostomi</taxon>
        <taxon>Mammalia</taxon>
        <taxon>Eutheria</taxon>
        <taxon>Euarchontoglires</taxon>
        <taxon>Primates</taxon>
        <taxon>Haplorrhini</taxon>
        <taxon>Catarrhini</taxon>
        <taxon>Hominidae</taxon>
        <taxon>Pongo</taxon>
    </lineage>
</organism>
<dbReference type="EMBL" id="CR860651">
    <property type="protein sequence ID" value="CAH92771.1"/>
    <property type="molecule type" value="mRNA"/>
</dbReference>
<dbReference type="EMBL" id="CR861448">
    <property type="protein sequence ID" value="CAH93504.1"/>
    <property type="molecule type" value="mRNA"/>
</dbReference>
<dbReference type="RefSeq" id="NP_001127049.1">
    <property type="nucleotide sequence ID" value="NM_001133577.1"/>
</dbReference>
<dbReference type="SMR" id="Q5R412"/>
<dbReference type="FunCoup" id="Q5R412">
    <property type="interactions" value="650"/>
</dbReference>
<dbReference type="STRING" id="9601.ENSPPYP00000001443"/>
<dbReference type="GlyCosmos" id="Q5R412">
    <property type="glycosylation" value="6 sites, No reported glycans"/>
</dbReference>
<dbReference type="GeneID" id="100174077"/>
<dbReference type="KEGG" id="pon:100174077"/>
<dbReference type="CTD" id="257194"/>
<dbReference type="eggNOG" id="KOG3510">
    <property type="taxonomic scope" value="Eukaryota"/>
</dbReference>
<dbReference type="InParanoid" id="Q5R412"/>
<dbReference type="OrthoDB" id="6159398at2759"/>
<dbReference type="Proteomes" id="UP000001595">
    <property type="component" value="Unplaced"/>
</dbReference>
<dbReference type="GO" id="GO:0005886">
    <property type="term" value="C:plasma membrane"/>
    <property type="evidence" value="ECO:0007669"/>
    <property type="project" value="UniProtKB-SubCell"/>
</dbReference>
<dbReference type="GO" id="GO:0098552">
    <property type="term" value="C:side of membrane"/>
    <property type="evidence" value="ECO:0007669"/>
    <property type="project" value="UniProtKB-KW"/>
</dbReference>
<dbReference type="GO" id="GO:0007155">
    <property type="term" value="P:cell adhesion"/>
    <property type="evidence" value="ECO:0007669"/>
    <property type="project" value="UniProtKB-KW"/>
</dbReference>
<dbReference type="FunFam" id="2.60.40.10:FF:000013">
    <property type="entry name" value="cell adhesion molecule 1 isoform X1"/>
    <property type="match status" value="1"/>
</dbReference>
<dbReference type="FunFam" id="2.60.40.10:FF:000500">
    <property type="entry name" value="limbic system-associated membrane protein isoform X1"/>
    <property type="match status" value="1"/>
</dbReference>
<dbReference type="FunFam" id="2.60.40.10:FF:000113">
    <property type="entry name" value="Opioid-binding protein/cell adhesion molecule"/>
    <property type="match status" value="1"/>
</dbReference>
<dbReference type="Gene3D" id="2.60.40.10">
    <property type="entry name" value="Immunoglobulins"/>
    <property type="match status" value="3"/>
</dbReference>
<dbReference type="InterPro" id="IPR007110">
    <property type="entry name" value="Ig-like_dom"/>
</dbReference>
<dbReference type="InterPro" id="IPR036179">
    <property type="entry name" value="Ig-like_dom_sf"/>
</dbReference>
<dbReference type="InterPro" id="IPR013783">
    <property type="entry name" value="Ig-like_fold"/>
</dbReference>
<dbReference type="InterPro" id="IPR013098">
    <property type="entry name" value="Ig_I-set"/>
</dbReference>
<dbReference type="InterPro" id="IPR003599">
    <property type="entry name" value="Ig_sub"/>
</dbReference>
<dbReference type="InterPro" id="IPR003598">
    <property type="entry name" value="Ig_sub2"/>
</dbReference>
<dbReference type="InterPro" id="IPR050876">
    <property type="entry name" value="IgLON_domain"/>
</dbReference>
<dbReference type="PANTHER" id="PTHR42757">
    <property type="entry name" value="IGLON FAMILY OF IMMUNOGLOBULIN SUPERFAMILY-RELATED"/>
    <property type="match status" value="1"/>
</dbReference>
<dbReference type="PANTHER" id="PTHR42757:SF6">
    <property type="entry name" value="NEURONAL GROWTH REGULATOR 1"/>
    <property type="match status" value="1"/>
</dbReference>
<dbReference type="Pfam" id="PF07679">
    <property type="entry name" value="I-set"/>
    <property type="match status" value="1"/>
</dbReference>
<dbReference type="Pfam" id="PF13927">
    <property type="entry name" value="Ig_3"/>
    <property type="match status" value="2"/>
</dbReference>
<dbReference type="SMART" id="SM00409">
    <property type="entry name" value="IG"/>
    <property type="match status" value="3"/>
</dbReference>
<dbReference type="SMART" id="SM00408">
    <property type="entry name" value="IGc2"/>
    <property type="match status" value="3"/>
</dbReference>
<dbReference type="SUPFAM" id="SSF48726">
    <property type="entry name" value="Immunoglobulin"/>
    <property type="match status" value="3"/>
</dbReference>
<dbReference type="PROSITE" id="PS50835">
    <property type="entry name" value="IG_LIKE"/>
    <property type="match status" value="3"/>
</dbReference>
<sequence>MDMMLLVQGACCSNQWLAAVLLSLCCLLPSCLPAGQSVDFPWAAVDNMMVRKGDTAVLRCYLEDGASKGAWLNRSSIIFAGGDKWSVDPRVSISTLNKRDYSLQIQNVDVTDDGPYTCSVQTQHTPRTMQVHLTVQVPPKIYDISSDMTINEGTNVTLTCLATGKPEPSISWRHISPSAKPFENGQYLDIYGITRDQAGEYECSAENDVSFPDVRKVKVVVNFAPTIQEIKSGTMTPGRSGLIRCEGAGVPPPAFEWYKGEKKLFNGQQGIIIQNFSTRSILTVTNVTQEHFGNYTCVAANKLGTTNASLPLNPPSTAQYGITGSADVLFSCWYLVLTLSSFTSIFYLKNAILQ</sequence>
<evidence type="ECO:0000250" key="1"/>
<evidence type="ECO:0000250" key="2">
    <source>
        <dbReference type="UniProtKB" id="Q7Z3B1"/>
    </source>
</evidence>
<evidence type="ECO:0000250" key="3">
    <source>
        <dbReference type="UniProtKB" id="Q80Z24"/>
    </source>
</evidence>
<evidence type="ECO:0000255" key="4"/>
<evidence type="ECO:0000255" key="5">
    <source>
        <dbReference type="PROSITE-ProRule" id="PRU00114"/>
    </source>
</evidence>
<evidence type="ECO:0000305" key="6"/>
<proteinExistence type="evidence at transcript level"/>
<protein>
    <recommendedName>
        <fullName>Neuronal growth regulator 1</fullName>
    </recommendedName>
</protein>
<keyword id="KW-0130">Cell adhesion</keyword>
<keyword id="KW-1003">Cell membrane</keyword>
<keyword id="KW-1015">Disulfide bond</keyword>
<keyword id="KW-0325">Glycoprotein</keyword>
<keyword id="KW-0336">GPI-anchor</keyword>
<keyword id="KW-0393">Immunoglobulin domain</keyword>
<keyword id="KW-0449">Lipoprotein</keyword>
<keyword id="KW-0472">Membrane</keyword>
<keyword id="KW-0597">Phosphoprotein</keyword>
<keyword id="KW-1185">Reference proteome</keyword>
<keyword id="KW-0677">Repeat</keyword>
<keyword id="KW-0732">Signal</keyword>
<feature type="signal peptide" evidence="4">
    <location>
        <begin position="1"/>
        <end position="37"/>
    </location>
</feature>
<feature type="chain" id="PRO_0000223871" description="Neuronal growth regulator 1">
    <location>
        <begin position="38"/>
        <end position="324"/>
    </location>
</feature>
<feature type="propeptide" id="PRO_0000223872" description="Removed in mature form" evidence="4">
    <location>
        <begin position="325"/>
        <end position="354"/>
    </location>
</feature>
<feature type="domain" description="Ig-like C2-type 1">
    <location>
        <begin position="38"/>
        <end position="134"/>
    </location>
</feature>
<feature type="domain" description="Ig-like C2-type 2">
    <location>
        <begin position="139"/>
        <end position="221"/>
    </location>
</feature>
<feature type="domain" description="Ig-like C2-type 3">
    <location>
        <begin position="225"/>
        <end position="313"/>
    </location>
</feature>
<feature type="modified residue" description="Phosphotyrosine" evidence="3">
    <location>
        <position position="187"/>
    </location>
</feature>
<feature type="lipid moiety-binding region" description="GPI-anchor amidated glycine" evidence="2">
    <location>
        <position position="324"/>
    </location>
</feature>
<feature type="glycosylation site" description="N-linked (GlcNAc...) asparagine" evidence="4">
    <location>
        <position position="73"/>
    </location>
</feature>
<feature type="glycosylation site" description="N-linked (GlcNAc...) asparagine" evidence="4">
    <location>
        <position position="155"/>
    </location>
</feature>
<feature type="glycosylation site" description="N-linked (GlcNAc...) asparagine" evidence="4">
    <location>
        <position position="275"/>
    </location>
</feature>
<feature type="glycosylation site" description="N-linked (GlcNAc...) asparagine" evidence="4">
    <location>
        <position position="286"/>
    </location>
</feature>
<feature type="glycosylation site" description="N-linked (GlcNAc...) asparagine" evidence="4">
    <location>
        <position position="294"/>
    </location>
</feature>
<feature type="glycosylation site" description="N-linked (GlcNAc...) asparagine" evidence="4">
    <location>
        <position position="307"/>
    </location>
</feature>
<feature type="disulfide bond" evidence="5">
    <location>
        <begin position="60"/>
        <end position="118"/>
    </location>
</feature>
<feature type="disulfide bond" evidence="5">
    <location>
        <begin position="160"/>
        <end position="203"/>
    </location>
</feature>
<feature type="disulfide bond" evidence="5">
    <location>
        <begin position="245"/>
        <end position="297"/>
    </location>
</feature>
<feature type="sequence conflict" description="In Ref. 1; CAH92771." evidence="6" ref="1">
    <original>A</original>
    <variation>T</variation>
    <location>
        <position position="205"/>
    </location>
</feature>
<feature type="sequence conflict" description="In Ref. 1; CAH92771." evidence="6" ref="1">
    <original>L</original>
    <variation>V</variation>
    <location>
        <position position="242"/>
    </location>
</feature>
<feature type="sequence conflict" description="In Ref. 1; CAH92771." evidence="6" ref="1">
    <original>L</original>
    <variation>F</variation>
    <location>
        <position position="282"/>
    </location>
</feature>
<name>NEGR1_PONAB</name>
<gene>
    <name type="primary">NEGR1</name>
</gene>
<accession>Q5R412</accession>
<accession>Q5R645</accession>